<evidence type="ECO:0000255" key="1">
    <source>
        <dbReference type="HAMAP-Rule" id="MF_00457"/>
    </source>
</evidence>
<accession>B8EPC4</accession>
<gene>
    <name type="ordered locus">Msil_0741</name>
</gene>
<reference key="1">
    <citation type="journal article" date="2010" name="J. Bacteriol.">
        <title>Complete genome sequence of the aerobic facultative methanotroph Methylocella silvestris BL2.</title>
        <authorList>
            <person name="Chen Y."/>
            <person name="Crombie A."/>
            <person name="Rahman M.T."/>
            <person name="Dedysh S.N."/>
            <person name="Liesack W."/>
            <person name="Stott M.B."/>
            <person name="Alam M."/>
            <person name="Theisen A.R."/>
            <person name="Murrell J.C."/>
            <person name="Dunfield P.F."/>
        </authorList>
    </citation>
    <scope>NUCLEOTIDE SEQUENCE [LARGE SCALE GENOMIC DNA]</scope>
    <source>
        <strain>DSM 15510 / CIP 108128 / LMG 27833 / NCIMB 13906 / BL2</strain>
    </source>
</reference>
<sequence length="232" mass="24200">MKLVWLGHSAFRVELDGAVILIDPFLSGNPKFNGSVAEASAGATHIVLTHGHDDHIGDAPDIAKATGAQIVANFEVCMFLNGKGAENINPGNTGGSIDCGAFVVSLTQALHSSGTTENGQSIYLGNPNGVVITPKQGPTLYHMGDTEIFSDMALIAEIYNPQIGIVPIGDRFTMGAKTAALAVRRYFKFDAVVPCHYGTFGLLDQSPDAFIAALGGSGVKVDAPAIGGHMIY</sequence>
<name>Y741_METSB</name>
<comment type="similarity">
    <text evidence="1">Belongs to the UPF0173 family.</text>
</comment>
<proteinExistence type="inferred from homology"/>
<organism>
    <name type="scientific">Methylocella silvestris (strain DSM 15510 / CIP 108128 / LMG 27833 / NCIMB 13906 / BL2)</name>
    <dbReference type="NCBI Taxonomy" id="395965"/>
    <lineage>
        <taxon>Bacteria</taxon>
        <taxon>Pseudomonadati</taxon>
        <taxon>Pseudomonadota</taxon>
        <taxon>Alphaproteobacteria</taxon>
        <taxon>Hyphomicrobiales</taxon>
        <taxon>Beijerinckiaceae</taxon>
        <taxon>Methylocella</taxon>
    </lineage>
</organism>
<protein>
    <recommendedName>
        <fullName evidence="1">UPF0173 metal-dependent hydrolase Msil_0741</fullName>
    </recommendedName>
</protein>
<dbReference type="EMBL" id="CP001280">
    <property type="protein sequence ID" value="ACK49712.1"/>
    <property type="molecule type" value="Genomic_DNA"/>
</dbReference>
<dbReference type="RefSeq" id="WP_012589782.1">
    <property type="nucleotide sequence ID" value="NC_011666.1"/>
</dbReference>
<dbReference type="SMR" id="B8EPC4"/>
<dbReference type="KEGG" id="msl:Msil_0741"/>
<dbReference type="eggNOG" id="COG2220">
    <property type="taxonomic scope" value="Bacteria"/>
</dbReference>
<dbReference type="HOGENOM" id="CLU_070010_4_0_5"/>
<dbReference type="OrthoDB" id="9789133at2"/>
<dbReference type="Proteomes" id="UP000002257">
    <property type="component" value="Chromosome"/>
</dbReference>
<dbReference type="GO" id="GO:0016787">
    <property type="term" value="F:hydrolase activity"/>
    <property type="evidence" value="ECO:0007669"/>
    <property type="project" value="UniProtKB-UniRule"/>
</dbReference>
<dbReference type="CDD" id="cd06262">
    <property type="entry name" value="metallo-hydrolase-like_MBL-fold"/>
    <property type="match status" value="1"/>
</dbReference>
<dbReference type="Gene3D" id="3.60.15.10">
    <property type="entry name" value="Ribonuclease Z/Hydroxyacylglutathione hydrolase-like"/>
    <property type="match status" value="1"/>
</dbReference>
<dbReference type="HAMAP" id="MF_00457">
    <property type="entry name" value="UPF0173"/>
    <property type="match status" value="1"/>
</dbReference>
<dbReference type="InterPro" id="IPR001279">
    <property type="entry name" value="Metallo-B-lactamas"/>
</dbReference>
<dbReference type="InterPro" id="IPR036866">
    <property type="entry name" value="RibonucZ/Hydroxyglut_hydro"/>
</dbReference>
<dbReference type="InterPro" id="IPR022877">
    <property type="entry name" value="UPF0173"/>
</dbReference>
<dbReference type="InterPro" id="IPR050114">
    <property type="entry name" value="UPF0173_UPF0282_UlaG_hydrolase"/>
</dbReference>
<dbReference type="NCBIfam" id="NF001911">
    <property type="entry name" value="PRK00685.1"/>
    <property type="match status" value="1"/>
</dbReference>
<dbReference type="PANTHER" id="PTHR43546:SF3">
    <property type="entry name" value="UPF0173 METAL-DEPENDENT HYDROLASE MJ1163"/>
    <property type="match status" value="1"/>
</dbReference>
<dbReference type="PANTHER" id="PTHR43546">
    <property type="entry name" value="UPF0173 METAL-DEPENDENT HYDROLASE MJ1163-RELATED"/>
    <property type="match status" value="1"/>
</dbReference>
<dbReference type="Pfam" id="PF13483">
    <property type="entry name" value="Lactamase_B_3"/>
    <property type="match status" value="1"/>
</dbReference>
<dbReference type="SMART" id="SM00849">
    <property type="entry name" value="Lactamase_B"/>
    <property type="match status" value="1"/>
</dbReference>
<dbReference type="SUPFAM" id="SSF56281">
    <property type="entry name" value="Metallo-hydrolase/oxidoreductase"/>
    <property type="match status" value="1"/>
</dbReference>
<feature type="chain" id="PRO_1000197815" description="UPF0173 metal-dependent hydrolase Msil_0741">
    <location>
        <begin position="1"/>
        <end position="232"/>
    </location>
</feature>
<keyword id="KW-0378">Hydrolase</keyword>
<keyword id="KW-1185">Reference proteome</keyword>